<proteinExistence type="evidence at protein level"/>
<comment type="function">
    <text>Implicated in the defense of plants against pathogens.</text>
</comment>
<comment type="catalytic activity">
    <reaction>
        <text>Hydrolysis of (1-&gt;3)-beta-D-glucosidic linkages in (1-&gt;3)-beta-D-glucans.</text>
        <dbReference type="EC" id="3.2.1.39"/>
    </reaction>
</comment>
<comment type="subcellular location">
    <subcellularLocation>
        <location>Secreted</location>
        <location>Extracellular space</location>
    </subcellularLocation>
</comment>
<comment type="induction">
    <text>Not found in healthy tissues, but accumulates to high levels in the extracellular compartment of leaves in response to pathogen infection or treatment with salicylic acid.</text>
</comment>
<comment type="PTM">
    <text>The N-terminus is blocked.</text>
</comment>
<comment type="similarity">
    <text evidence="2">Belongs to the glycosyl hydrolase 17 family.</text>
</comment>
<gene>
    <name type="primary">PRN</name>
</gene>
<sequence length="275" mass="30386">NVFNALRGSNIEIILDVPLQDLQSLTDPSRANGWVQDNIINHFPDVKFKYIAVGNKVSPGNNGQYAPFVAPAMQNVYNALAAAGLQDQIKVSTATYSGILANTYPPKDSIFRGEFNSFINPIIQFLVQHNLPLLANVYPYFGHIFNTADVPLSYALFTQQEANPAGYQNLFDALLDSMYFAVEKAGGQNVEIIVSESGWPSEGNSAATIENAQTYYENLINHVKSGAGTPKKPGKAIETYLFAMFDENNKEGDITEKHFGLFSPDQRAKYQLNFN</sequence>
<protein>
    <recommendedName>
        <fullName>Glucan endo-1,3-beta-glucosidase, acidic isoform PR-N</fullName>
        <ecNumber>3.2.1.39</ecNumber>
    </recommendedName>
    <alternativeName>
        <fullName>(1-&gt;3)-beta-glucan endohydrolase</fullName>
        <shortName>(1-&gt;3)-beta-glucanase</shortName>
    </alternativeName>
    <alternativeName>
        <fullName>Beta-1,3-endoglucanase</fullName>
    </alternativeName>
</protein>
<reference key="1">
    <citation type="journal article" date="1991" name="Plant Physiol.">
        <title>Differential regulation of beta-1,3-glucanase messenger RNAs in response to pathogen infection.</title>
        <authorList>
            <person name="Ward E.R."/>
            <person name="Payne G.B."/>
            <person name="Moyer M.B."/>
            <person name="Williams S.C."/>
            <person name="Dincher S.S."/>
            <person name="Sharkey K.C."/>
            <person name="Beck J.J."/>
            <person name="Taylor H.T."/>
            <person name="Ahl-Goy P."/>
            <person name="Meins F."/>
            <person name="Ryals J.A."/>
        </authorList>
    </citation>
    <scope>NUCLEOTIDE SEQUENCE [MRNA]</scope>
    <scope>PARTIAL PROTEIN SEQUENCE</scope>
    <source>
        <strain>cv. Xanthi NC</strain>
        <tissue>Leaf</tissue>
    </source>
</reference>
<name>E13I_TOBAC</name>
<keyword id="KW-0903">Direct protein sequencing</keyword>
<keyword id="KW-0326">Glycosidase</keyword>
<keyword id="KW-0378">Hydrolase</keyword>
<keyword id="KW-0611">Plant defense</keyword>
<keyword id="KW-1185">Reference proteome</keyword>
<keyword id="KW-0964">Secreted</keyword>
<accession>P52396</accession>
<dbReference type="EC" id="3.2.1.39"/>
<dbReference type="EMBL" id="M60462">
    <property type="protein sequence ID" value="AAA34105.1"/>
    <property type="molecule type" value="mRNA"/>
</dbReference>
<dbReference type="SMR" id="P52396"/>
<dbReference type="STRING" id="4097.P52396"/>
<dbReference type="CAZy" id="GH17">
    <property type="family name" value="Glycoside Hydrolase Family 17"/>
</dbReference>
<dbReference type="PaxDb" id="4097-P52396"/>
<dbReference type="Proteomes" id="UP000084051">
    <property type="component" value="Unplaced"/>
</dbReference>
<dbReference type="GO" id="GO:0005576">
    <property type="term" value="C:extracellular region"/>
    <property type="evidence" value="ECO:0007669"/>
    <property type="project" value="UniProtKB-SubCell"/>
</dbReference>
<dbReference type="GO" id="GO:0042973">
    <property type="term" value="F:glucan endo-1,3-beta-D-glucosidase activity"/>
    <property type="evidence" value="ECO:0007669"/>
    <property type="project" value="UniProtKB-EC"/>
</dbReference>
<dbReference type="GO" id="GO:0005975">
    <property type="term" value="P:carbohydrate metabolic process"/>
    <property type="evidence" value="ECO:0007669"/>
    <property type="project" value="InterPro"/>
</dbReference>
<dbReference type="GO" id="GO:0006952">
    <property type="term" value="P:defense response"/>
    <property type="evidence" value="ECO:0007669"/>
    <property type="project" value="UniProtKB-KW"/>
</dbReference>
<dbReference type="FunFam" id="3.20.20.80:FF:000010">
    <property type="entry name" value="glucan endo-1,3-beta-glucosidase, basic"/>
    <property type="match status" value="1"/>
</dbReference>
<dbReference type="Gene3D" id="3.20.20.80">
    <property type="entry name" value="Glycosidases"/>
    <property type="match status" value="1"/>
</dbReference>
<dbReference type="InterPro" id="IPR000490">
    <property type="entry name" value="Glyco_hydro_17"/>
</dbReference>
<dbReference type="InterPro" id="IPR044965">
    <property type="entry name" value="Glyco_hydro_17_plant"/>
</dbReference>
<dbReference type="InterPro" id="IPR017853">
    <property type="entry name" value="Glycoside_hydrolase_SF"/>
</dbReference>
<dbReference type="PANTHER" id="PTHR32227">
    <property type="entry name" value="GLUCAN ENDO-1,3-BETA-GLUCOSIDASE BG1-RELATED-RELATED"/>
    <property type="match status" value="1"/>
</dbReference>
<dbReference type="Pfam" id="PF00332">
    <property type="entry name" value="Glyco_hydro_17"/>
    <property type="match status" value="1"/>
</dbReference>
<dbReference type="SUPFAM" id="SSF51445">
    <property type="entry name" value="(Trans)glycosidases"/>
    <property type="match status" value="1"/>
</dbReference>
<dbReference type="PROSITE" id="PS00587">
    <property type="entry name" value="GLYCOSYL_HYDROL_F17"/>
    <property type="match status" value="1"/>
</dbReference>
<evidence type="ECO:0000250" key="1">
    <source>
        <dbReference type="UniProtKB" id="O22317"/>
    </source>
</evidence>
<evidence type="ECO:0000305" key="2"/>
<organism>
    <name type="scientific">Nicotiana tabacum</name>
    <name type="common">Common tobacco</name>
    <dbReference type="NCBI Taxonomy" id="4097"/>
    <lineage>
        <taxon>Eukaryota</taxon>
        <taxon>Viridiplantae</taxon>
        <taxon>Streptophyta</taxon>
        <taxon>Embryophyta</taxon>
        <taxon>Tracheophyta</taxon>
        <taxon>Spermatophyta</taxon>
        <taxon>Magnoliopsida</taxon>
        <taxon>eudicotyledons</taxon>
        <taxon>Gunneridae</taxon>
        <taxon>Pentapetalae</taxon>
        <taxon>asterids</taxon>
        <taxon>lamiids</taxon>
        <taxon>Solanales</taxon>
        <taxon>Solanaceae</taxon>
        <taxon>Nicotianoideae</taxon>
        <taxon>Nicotianeae</taxon>
        <taxon>Nicotiana</taxon>
    </lineage>
</organism>
<feature type="chain" id="PRO_0000205277" description="Glucan endo-1,3-beta-glucosidase, acidic isoform PR-N">
    <location>
        <begin position="1" status="less than"/>
        <end position="275"/>
    </location>
</feature>
<feature type="active site" description="Nucleophile" evidence="1">
    <location>
        <position position="196"/>
    </location>
</feature>
<feature type="non-terminal residue">
    <location>
        <position position="1"/>
    </location>
</feature>